<proteinExistence type="inferred from homology"/>
<accession>Q2SCH1</accession>
<evidence type="ECO:0000255" key="1">
    <source>
        <dbReference type="HAMAP-Rule" id="MF_01858"/>
    </source>
</evidence>
<keyword id="KW-0963">Cytoplasm</keyword>
<keyword id="KW-0489">Methyltransferase</keyword>
<keyword id="KW-1185">Reference proteome</keyword>
<keyword id="KW-0694">RNA-binding</keyword>
<keyword id="KW-0698">rRNA processing</keyword>
<keyword id="KW-0949">S-adenosyl-L-methionine</keyword>
<keyword id="KW-0808">Transferase</keyword>
<feature type="chain" id="PRO_0000366765" description="Ribosomal RNA large subunit methyltransferase K/L">
    <location>
        <begin position="1"/>
        <end position="717"/>
    </location>
</feature>
<feature type="domain" description="THUMP" evidence="1">
    <location>
        <begin position="45"/>
        <end position="142"/>
    </location>
</feature>
<dbReference type="EC" id="2.1.1.173" evidence="1"/>
<dbReference type="EC" id="2.1.1.264" evidence="1"/>
<dbReference type="EMBL" id="CP000155">
    <property type="protein sequence ID" value="ABC31653.1"/>
    <property type="molecule type" value="Genomic_DNA"/>
</dbReference>
<dbReference type="RefSeq" id="WP_011398718.1">
    <property type="nucleotide sequence ID" value="NC_007645.1"/>
</dbReference>
<dbReference type="SMR" id="Q2SCH1"/>
<dbReference type="STRING" id="349521.HCH_04964"/>
<dbReference type="KEGG" id="hch:HCH_04964"/>
<dbReference type="eggNOG" id="COG0116">
    <property type="taxonomic scope" value="Bacteria"/>
</dbReference>
<dbReference type="eggNOG" id="COG1092">
    <property type="taxonomic scope" value="Bacteria"/>
</dbReference>
<dbReference type="HOGENOM" id="CLU_014042_2_0_6"/>
<dbReference type="OrthoDB" id="9809404at2"/>
<dbReference type="Proteomes" id="UP000000238">
    <property type="component" value="Chromosome"/>
</dbReference>
<dbReference type="GO" id="GO:0005737">
    <property type="term" value="C:cytoplasm"/>
    <property type="evidence" value="ECO:0007669"/>
    <property type="project" value="UniProtKB-SubCell"/>
</dbReference>
<dbReference type="GO" id="GO:0052915">
    <property type="term" value="F:23S rRNA (guanine(2445)-N(2))-methyltransferase activity"/>
    <property type="evidence" value="ECO:0007669"/>
    <property type="project" value="UniProtKB-UniRule"/>
</dbReference>
<dbReference type="GO" id="GO:0003723">
    <property type="term" value="F:RNA binding"/>
    <property type="evidence" value="ECO:0007669"/>
    <property type="project" value="UniProtKB-KW"/>
</dbReference>
<dbReference type="GO" id="GO:0070043">
    <property type="term" value="F:rRNA (guanine-N7-)-methyltransferase activity"/>
    <property type="evidence" value="ECO:0007669"/>
    <property type="project" value="UniProtKB-UniRule"/>
</dbReference>
<dbReference type="CDD" id="cd02440">
    <property type="entry name" value="AdoMet_MTases"/>
    <property type="match status" value="1"/>
</dbReference>
<dbReference type="CDD" id="cd11715">
    <property type="entry name" value="THUMP_AdoMetMT"/>
    <property type="match status" value="1"/>
</dbReference>
<dbReference type="Gene3D" id="3.30.2130.30">
    <property type="match status" value="1"/>
</dbReference>
<dbReference type="Gene3D" id="3.30.750.80">
    <property type="entry name" value="RNA methyltransferase domain (HRMD) like"/>
    <property type="match status" value="1"/>
</dbReference>
<dbReference type="Gene3D" id="3.40.50.150">
    <property type="entry name" value="Vaccinia Virus protein VP39"/>
    <property type="match status" value="2"/>
</dbReference>
<dbReference type="HAMAP" id="MF_01858">
    <property type="entry name" value="23SrRNA_methyltr_KL"/>
    <property type="match status" value="1"/>
</dbReference>
<dbReference type="InterPro" id="IPR017244">
    <property type="entry name" value="23SrRNA_methyltr_KL"/>
</dbReference>
<dbReference type="InterPro" id="IPR002052">
    <property type="entry name" value="DNA_methylase_N6_adenine_CS"/>
</dbReference>
<dbReference type="InterPro" id="IPR000241">
    <property type="entry name" value="RlmKL-like_Mtase"/>
</dbReference>
<dbReference type="InterPro" id="IPR054170">
    <property type="entry name" value="RlmL_1st"/>
</dbReference>
<dbReference type="InterPro" id="IPR019614">
    <property type="entry name" value="SAM-dep_methyl-trfase"/>
</dbReference>
<dbReference type="InterPro" id="IPR029063">
    <property type="entry name" value="SAM-dependent_MTases_sf"/>
</dbReference>
<dbReference type="NCBIfam" id="NF008748">
    <property type="entry name" value="PRK11783.1"/>
    <property type="match status" value="1"/>
</dbReference>
<dbReference type="PANTHER" id="PTHR47313">
    <property type="entry name" value="RIBOSOMAL RNA LARGE SUBUNIT METHYLTRANSFERASE K/L"/>
    <property type="match status" value="1"/>
</dbReference>
<dbReference type="PANTHER" id="PTHR47313:SF1">
    <property type="entry name" value="RIBOSOMAL RNA LARGE SUBUNIT METHYLTRANSFERASE K_L"/>
    <property type="match status" value="1"/>
</dbReference>
<dbReference type="Pfam" id="PF10672">
    <property type="entry name" value="Methyltrans_SAM"/>
    <property type="match status" value="1"/>
</dbReference>
<dbReference type="Pfam" id="PF22020">
    <property type="entry name" value="RlmL_1st"/>
    <property type="match status" value="1"/>
</dbReference>
<dbReference type="Pfam" id="PF01170">
    <property type="entry name" value="UPF0020"/>
    <property type="match status" value="1"/>
</dbReference>
<dbReference type="PIRSF" id="PIRSF037618">
    <property type="entry name" value="RNA_Mtase_bacteria_prd"/>
    <property type="match status" value="1"/>
</dbReference>
<dbReference type="SUPFAM" id="SSF53335">
    <property type="entry name" value="S-adenosyl-L-methionine-dependent methyltransferases"/>
    <property type="match status" value="2"/>
</dbReference>
<name>RLMKL_HAHCH</name>
<comment type="function">
    <text evidence="1">Specifically methylates the guanine in position 2445 (m2G2445) and the guanine in position 2069 (m7G2069) of 23S rRNA.</text>
</comment>
<comment type="catalytic activity">
    <reaction evidence="1">
        <text>guanosine(2445) in 23S rRNA + S-adenosyl-L-methionine = N(2)-methylguanosine(2445) in 23S rRNA + S-adenosyl-L-homocysteine + H(+)</text>
        <dbReference type="Rhea" id="RHEA:42740"/>
        <dbReference type="Rhea" id="RHEA-COMP:10215"/>
        <dbReference type="Rhea" id="RHEA-COMP:10216"/>
        <dbReference type="ChEBI" id="CHEBI:15378"/>
        <dbReference type="ChEBI" id="CHEBI:57856"/>
        <dbReference type="ChEBI" id="CHEBI:59789"/>
        <dbReference type="ChEBI" id="CHEBI:74269"/>
        <dbReference type="ChEBI" id="CHEBI:74481"/>
        <dbReference type="EC" id="2.1.1.173"/>
    </reaction>
</comment>
<comment type="catalytic activity">
    <reaction evidence="1">
        <text>guanosine(2069) in 23S rRNA + S-adenosyl-L-methionine = N(2)-methylguanosine(2069) in 23S rRNA + S-adenosyl-L-homocysteine + H(+)</text>
        <dbReference type="Rhea" id="RHEA:43772"/>
        <dbReference type="Rhea" id="RHEA-COMP:10688"/>
        <dbReference type="Rhea" id="RHEA-COMP:10689"/>
        <dbReference type="ChEBI" id="CHEBI:15378"/>
        <dbReference type="ChEBI" id="CHEBI:57856"/>
        <dbReference type="ChEBI" id="CHEBI:59789"/>
        <dbReference type="ChEBI" id="CHEBI:74269"/>
        <dbReference type="ChEBI" id="CHEBI:74481"/>
        <dbReference type="EC" id="2.1.1.264"/>
    </reaction>
</comment>
<comment type="subcellular location">
    <subcellularLocation>
        <location evidence="1">Cytoplasm</location>
    </subcellularLocation>
</comment>
<comment type="similarity">
    <text evidence="1">Belongs to the methyltransferase superfamily. RlmKL family.</text>
</comment>
<organism>
    <name type="scientific">Hahella chejuensis (strain KCTC 2396)</name>
    <dbReference type="NCBI Taxonomy" id="349521"/>
    <lineage>
        <taxon>Bacteria</taxon>
        <taxon>Pseudomonadati</taxon>
        <taxon>Pseudomonadota</taxon>
        <taxon>Gammaproteobacteria</taxon>
        <taxon>Oceanospirillales</taxon>
        <taxon>Hahellaceae</taxon>
        <taxon>Hahella</taxon>
    </lineage>
</organism>
<gene>
    <name evidence="1" type="primary">rlmL</name>
    <name type="ordered locus">HCH_04964</name>
</gene>
<protein>
    <recommendedName>
        <fullName evidence="1">Ribosomal RNA large subunit methyltransferase K/L</fullName>
    </recommendedName>
    <domain>
        <recommendedName>
            <fullName evidence="1">23S rRNA m2G2445 methyltransferase</fullName>
            <ecNumber evidence="1">2.1.1.173</ecNumber>
        </recommendedName>
        <alternativeName>
            <fullName evidence="1">rRNA (guanine-N(2)-)-methyltransferase RlmL</fullName>
        </alternativeName>
    </domain>
    <domain>
        <recommendedName>
            <fullName evidence="1">23S rRNA m7G2069 methyltransferase</fullName>
            <ecNumber evidence="1">2.1.1.264</ecNumber>
        </recommendedName>
        <alternativeName>
            <fullName evidence="1">rRNA (guanine-N(7)-)-methyltransferase RlmK</fullName>
        </alternativeName>
    </domain>
</protein>
<sequence length="717" mass="80840">MNEFSLFASCPKGLEYVLADELKTLGAEVLRTNPAGVEAKVDLAGAYRICLGSRLANRVLRLLQSTRTATRDGLYQAASEVNWSEHLRPGESYWIAAFGSSGDIRHSRFGAQVVKDAINDHFRDRDLELPVIDKRSGVQTVQLNLAKTITLGLDLAGRSLHQRGYRQEGAAAPLKENLAAAILYRAGWPEICGEDGCFVDPMCGSGTLVVEAAMIAMNIAPGLLNPHFLFEKAPWHDPEVWRGVYEEAMEKAVLGKRRWRGAIFGCDLNPAAIRTAKRNLSRAGLDRWVKLETASAMDFTPDTEGCGQRLLVCNPPYGERLGQELELRSLYRALGRRLKTAYGEWKAGIFTSSVNLAKEIGLRADKQYHLYNGPLATTLYLFDVYGNRPEAETPRKPQNASLEGISEQAQMFRNRLSKNLAKWSKWAKKQQLSAYRIYDADMPEYAVAIDWYDGGIIVQEYAPPKSVDEEKARQRLLDVLEVTPAVLGIDGGQLFLKQRKKQKGMLQYEKTDSSRKERTVEEHGCRFWVNLSDYLDSGLFLDHRPTRYWIQKHSSGKRFLNLFCYTGAASVHAAAGGAATTTSVDMSQTYLSWAERNFHLNKLSGPHRFVRANVLDWLKAEHNSYDLIFLDPPTFSNSKKMEDVLDIQRDHAGLIEDCMRLLAPGGVLIFSCNYRRFKLDSGIEQRFAVENHTAASIPEDFKRNERIHQCWHIRHSA</sequence>
<reference key="1">
    <citation type="journal article" date="2005" name="Nucleic Acids Res.">
        <title>Genomic blueprint of Hahella chejuensis, a marine microbe producing an algicidal agent.</title>
        <authorList>
            <person name="Jeong H."/>
            <person name="Yim J.H."/>
            <person name="Lee C."/>
            <person name="Choi S.-H."/>
            <person name="Park Y.K."/>
            <person name="Yoon S.H."/>
            <person name="Hur C.-G."/>
            <person name="Kang H.-Y."/>
            <person name="Kim D."/>
            <person name="Lee H.H."/>
            <person name="Park K.H."/>
            <person name="Park S.-H."/>
            <person name="Park H.-S."/>
            <person name="Lee H.K."/>
            <person name="Oh T.K."/>
            <person name="Kim J.F."/>
        </authorList>
    </citation>
    <scope>NUCLEOTIDE SEQUENCE [LARGE SCALE GENOMIC DNA]</scope>
    <source>
        <strain>KCTC 2396</strain>
    </source>
</reference>